<name>YIAT_ECO57</name>
<organism>
    <name type="scientific">Escherichia coli O157:H7</name>
    <dbReference type="NCBI Taxonomy" id="83334"/>
    <lineage>
        <taxon>Bacteria</taxon>
        <taxon>Pseudomonadati</taxon>
        <taxon>Pseudomonadota</taxon>
        <taxon>Gammaproteobacteria</taxon>
        <taxon>Enterobacterales</taxon>
        <taxon>Enterobacteriaceae</taxon>
        <taxon>Escherichia</taxon>
    </lineage>
</organism>
<accession>P58224</accession>
<dbReference type="EMBL" id="AE005174">
    <property type="protein sequence ID" value="AAG58727.1"/>
    <property type="molecule type" value="Genomic_DNA"/>
</dbReference>
<dbReference type="EMBL" id="BA000007">
    <property type="protein sequence ID" value="BAB37883.1"/>
    <property type="molecule type" value="Genomic_DNA"/>
</dbReference>
<dbReference type="PIR" id="C86033">
    <property type="entry name" value="C86033"/>
</dbReference>
<dbReference type="PIR" id="D91186">
    <property type="entry name" value="D91186"/>
</dbReference>
<dbReference type="RefSeq" id="NP_312487.1">
    <property type="nucleotide sequence ID" value="NC_002695.1"/>
</dbReference>
<dbReference type="RefSeq" id="WP_000906806.1">
    <property type="nucleotide sequence ID" value="NZ_VOAI01000004.1"/>
</dbReference>
<dbReference type="STRING" id="155864.Z5003"/>
<dbReference type="GeneID" id="915598"/>
<dbReference type="KEGG" id="ece:Z5003"/>
<dbReference type="KEGG" id="ecs:ECs_4460"/>
<dbReference type="PATRIC" id="fig|386585.9.peg.4670"/>
<dbReference type="eggNOG" id="COG3713">
    <property type="taxonomic scope" value="Bacteria"/>
</dbReference>
<dbReference type="HOGENOM" id="CLU_063465_3_0_6"/>
<dbReference type="OMA" id="HYHADAG"/>
<dbReference type="Proteomes" id="UP000000558">
    <property type="component" value="Chromosome"/>
</dbReference>
<dbReference type="Proteomes" id="UP000002519">
    <property type="component" value="Chromosome"/>
</dbReference>
<dbReference type="GO" id="GO:0009279">
    <property type="term" value="C:cell outer membrane"/>
    <property type="evidence" value="ECO:0007669"/>
    <property type="project" value="UniProtKB-SubCell"/>
</dbReference>
<dbReference type="GO" id="GO:0009252">
    <property type="term" value="P:peptidoglycan biosynthetic process"/>
    <property type="evidence" value="ECO:0007669"/>
    <property type="project" value="TreeGrafter"/>
</dbReference>
<dbReference type="InterPro" id="IPR010583">
    <property type="entry name" value="MipA"/>
</dbReference>
<dbReference type="PANTHER" id="PTHR38776">
    <property type="entry name" value="MLTA-INTERACTING PROTEIN-RELATED"/>
    <property type="match status" value="1"/>
</dbReference>
<dbReference type="PANTHER" id="PTHR38776:SF1">
    <property type="entry name" value="MLTA-INTERACTING PROTEIN-RELATED"/>
    <property type="match status" value="1"/>
</dbReference>
<dbReference type="Pfam" id="PF06629">
    <property type="entry name" value="MipA"/>
    <property type="match status" value="1"/>
</dbReference>
<feature type="signal peptide" evidence="1">
    <location>
        <begin position="1"/>
        <end position="21"/>
    </location>
</feature>
<feature type="chain" id="PRO_0000019098" description="Putative outer membrane protein YiaT">
    <location>
        <begin position="22"/>
        <end position="246"/>
    </location>
</feature>
<keyword id="KW-0998">Cell outer membrane</keyword>
<keyword id="KW-0472">Membrane</keyword>
<keyword id="KW-1185">Reference proteome</keyword>
<keyword id="KW-0732">Signal</keyword>
<evidence type="ECO:0000255" key="1"/>
<evidence type="ECO:0000305" key="2"/>
<protein>
    <recommendedName>
        <fullName>Putative outer membrane protein YiaT</fullName>
    </recommendedName>
</protein>
<proteinExistence type="inferred from homology"/>
<comment type="subcellular location">
    <subcellularLocation>
        <location evidence="2">Cell outer membrane</location>
        <topology evidence="2">Peripheral membrane protein</topology>
    </subcellularLocation>
</comment>
<comment type="similarity">
    <text evidence="2">Belongs to the MipA/OmpV family.</text>
</comment>
<sequence length="246" mass="27369">MLINRNIVALFALPFMASATASELSIGAGAAYNESPYRGYNENTKAIPLISYEGDSFYVRQTTLGFILSQSEKNELSLTASWMPLEFDPADNDDYAMQQLDKRDSTAMAGVAWYHHERWGTVKASAAADVLDNSNGWVGELSVFHKMQIGRLSLTPALGVLYYDENFSDYYYGISESESRRSGLASYSAQDAWVPYVSLTAKYPIGEHVVLMASAGYSELPEEITDSPMIDRNESFTFVTGVSWRF</sequence>
<reference key="1">
    <citation type="journal article" date="2001" name="Nature">
        <title>Genome sequence of enterohaemorrhagic Escherichia coli O157:H7.</title>
        <authorList>
            <person name="Perna N.T."/>
            <person name="Plunkett G. III"/>
            <person name="Burland V."/>
            <person name="Mau B."/>
            <person name="Glasner J.D."/>
            <person name="Rose D.J."/>
            <person name="Mayhew G.F."/>
            <person name="Evans P.S."/>
            <person name="Gregor J."/>
            <person name="Kirkpatrick H.A."/>
            <person name="Posfai G."/>
            <person name="Hackett J."/>
            <person name="Klink S."/>
            <person name="Boutin A."/>
            <person name="Shao Y."/>
            <person name="Miller L."/>
            <person name="Grotbeck E.J."/>
            <person name="Davis N.W."/>
            <person name="Lim A."/>
            <person name="Dimalanta E.T."/>
            <person name="Potamousis K."/>
            <person name="Apodaca J."/>
            <person name="Anantharaman T.S."/>
            <person name="Lin J."/>
            <person name="Yen G."/>
            <person name="Schwartz D.C."/>
            <person name="Welch R.A."/>
            <person name="Blattner F.R."/>
        </authorList>
    </citation>
    <scope>NUCLEOTIDE SEQUENCE [LARGE SCALE GENOMIC DNA]</scope>
    <source>
        <strain>O157:H7 / EDL933 / ATCC 700927 / EHEC</strain>
    </source>
</reference>
<reference key="2">
    <citation type="journal article" date="2001" name="DNA Res.">
        <title>Complete genome sequence of enterohemorrhagic Escherichia coli O157:H7 and genomic comparison with a laboratory strain K-12.</title>
        <authorList>
            <person name="Hayashi T."/>
            <person name="Makino K."/>
            <person name="Ohnishi M."/>
            <person name="Kurokawa K."/>
            <person name="Ishii K."/>
            <person name="Yokoyama K."/>
            <person name="Han C.-G."/>
            <person name="Ohtsubo E."/>
            <person name="Nakayama K."/>
            <person name="Murata T."/>
            <person name="Tanaka M."/>
            <person name="Tobe T."/>
            <person name="Iida T."/>
            <person name="Takami H."/>
            <person name="Honda T."/>
            <person name="Sasakawa C."/>
            <person name="Ogasawara N."/>
            <person name="Yasunaga T."/>
            <person name="Kuhara S."/>
            <person name="Shiba T."/>
            <person name="Hattori M."/>
            <person name="Shinagawa H."/>
        </authorList>
    </citation>
    <scope>NUCLEOTIDE SEQUENCE [LARGE SCALE GENOMIC DNA]</scope>
    <source>
        <strain>O157:H7 / Sakai / RIMD 0509952 / EHEC</strain>
    </source>
</reference>
<gene>
    <name type="primary">yiaT</name>
    <name type="ordered locus">Z5003</name>
    <name type="ordered locus">ECs4460</name>
</gene>